<organism>
    <name type="scientific">Rickettsia prowazekii (strain Madrid E)</name>
    <dbReference type="NCBI Taxonomy" id="272947"/>
    <lineage>
        <taxon>Bacteria</taxon>
        <taxon>Pseudomonadati</taxon>
        <taxon>Pseudomonadota</taxon>
        <taxon>Alphaproteobacteria</taxon>
        <taxon>Rickettsiales</taxon>
        <taxon>Rickettsiaceae</taxon>
        <taxon>Rickettsieae</taxon>
        <taxon>Rickettsia</taxon>
        <taxon>typhus group</taxon>
    </lineage>
</organism>
<comment type="function">
    <text evidence="1">Catalyzes the reversible oxidation of malate to oxaloacetate.</text>
</comment>
<comment type="catalytic activity">
    <reaction evidence="1">
        <text>(S)-malate + NAD(+) = oxaloacetate + NADH + H(+)</text>
        <dbReference type="Rhea" id="RHEA:21432"/>
        <dbReference type="ChEBI" id="CHEBI:15378"/>
        <dbReference type="ChEBI" id="CHEBI:15589"/>
        <dbReference type="ChEBI" id="CHEBI:16452"/>
        <dbReference type="ChEBI" id="CHEBI:57540"/>
        <dbReference type="ChEBI" id="CHEBI:57945"/>
        <dbReference type="EC" id="1.1.1.37"/>
    </reaction>
</comment>
<comment type="similarity">
    <text evidence="1">Belongs to the LDH/MDH superfamily. MDH type 3 family.</text>
</comment>
<reference key="1">
    <citation type="journal article" date="1998" name="Nature">
        <title>The genome sequence of Rickettsia prowazekii and the origin of mitochondria.</title>
        <authorList>
            <person name="Andersson S.G.E."/>
            <person name="Zomorodipour A."/>
            <person name="Andersson J.O."/>
            <person name="Sicheritz-Ponten T."/>
            <person name="Alsmark U.C.M."/>
            <person name="Podowski R.M."/>
            <person name="Naeslund A.K."/>
            <person name="Eriksson A.-S."/>
            <person name="Winkler H.H."/>
            <person name="Kurland C.G."/>
        </authorList>
    </citation>
    <scope>NUCLEOTIDE SEQUENCE [LARGE SCALE GENOMIC DNA]</scope>
    <source>
        <strain>Madrid E</strain>
    </source>
</reference>
<gene>
    <name evidence="1" type="primary">mdh</name>
    <name type="ordered locus">RP376</name>
</gene>
<feature type="chain" id="PRO_0000113469" description="Malate dehydrogenase">
    <location>
        <begin position="1"/>
        <end position="314"/>
    </location>
</feature>
<feature type="active site" description="Proton acceptor" evidence="1">
    <location>
        <position position="177"/>
    </location>
</feature>
<feature type="binding site" evidence="1">
    <location>
        <begin position="11"/>
        <end position="16"/>
    </location>
    <ligand>
        <name>NAD(+)</name>
        <dbReference type="ChEBI" id="CHEBI:57540"/>
    </ligand>
</feature>
<feature type="binding site" evidence="1">
    <location>
        <position position="35"/>
    </location>
    <ligand>
        <name>NAD(+)</name>
        <dbReference type="ChEBI" id="CHEBI:57540"/>
    </ligand>
</feature>
<feature type="binding site" evidence="1">
    <location>
        <position position="84"/>
    </location>
    <ligand>
        <name>substrate</name>
    </ligand>
</feature>
<feature type="binding site" evidence="1">
    <location>
        <position position="90"/>
    </location>
    <ligand>
        <name>substrate</name>
    </ligand>
</feature>
<feature type="binding site" evidence="1">
    <location>
        <position position="97"/>
    </location>
    <ligand>
        <name>NAD(+)</name>
        <dbReference type="ChEBI" id="CHEBI:57540"/>
    </ligand>
</feature>
<feature type="binding site" evidence="1">
    <location>
        <begin position="120"/>
        <end position="122"/>
    </location>
    <ligand>
        <name>NAD(+)</name>
        <dbReference type="ChEBI" id="CHEBI:57540"/>
    </ligand>
</feature>
<feature type="binding site" evidence="1">
    <location>
        <position position="122"/>
    </location>
    <ligand>
        <name>substrate</name>
    </ligand>
</feature>
<feature type="binding site" evidence="1">
    <location>
        <position position="153"/>
    </location>
    <ligand>
        <name>substrate</name>
    </ligand>
</feature>
<evidence type="ECO:0000255" key="1">
    <source>
        <dbReference type="HAMAP-Rule" id="MF_00487"/>
    </source>
</evidence>
<proteinExistence type="inferred from homology"/>
<protein>
    <recommendedName>
        <fullName evidence="1">Malate dehydrogenase</fullName>
        <ecNumber evidence="1">1.1.1.37</ecNumber>
    </recommendedName>
</protein>
<dbReference type="EC" id="1.1.1.37" evidence="1"/>
<dbReference type="EMBL" id="AJ235271">
    <property type="protein sequence ID" value="CAA14835.1"/>
    <property type="molecule type" value="Genomic_DNA"/>
</dbReference>
<dbReference type="PIR" id="A71695">
    <property type="entry name" value="A71695"/>
</dbReference>
<dbReference type="RefSeq" id="NP_220759.1">
    <property type="nucleotide sequence ID" value="NC_000963.1"/>
</dbReference>
<dbReference type="RefSeq" id="WP_004597533.1">
    <property type="nucleotide sequence ID" value="NC_000963.1"/>
</dbReference>
<dbReference type="SMR" id="Q9ZDF3"/>
<dbReference type="STRING" id="272947.gene:17555456"/>
<dbReference type="EnsemblBacteria" id="CAA14835">
    <property type="protein sequence ID" value="CAA14835"/>
    <property type="gene ID" value="CAA14835"/>
</dbReference>
<dbReference type="GeneID" id="57569500"/>
<dbReference type="KEGG" id="rpr:RP376"/>
<dbReference type="PATRIC" id="fig|272947.5.peg.388"/>
<dbReference type="eggNOG" id="COG0039">
    <property type="taxonomic scope" value="Bacteria"/>
</dbReference>
<dbReference type="HOGENOM" id="CLU_045401_2_1_5"/>
<dbReference type="OrthoDB" id="9802969at2"/>
<dbReference type="Proteomes" id="UP000002480">
    <property type="component" value="Chromosome"/>
</dbReference>
<dbReference type="GO" id="GO:0004459">
    <property type="term" value="F:L-lactate dehydrogenase activity"/>
    <property type="evidence" value="ECO:0007669"/>
    <property type="project" value="TreeGrafter"/>
</dbReference>
<dbReference type="GO" id="GO:0030060">
    <property type="term" value="F:L-malate dehydrogenase (NAD+) activity"/>
    <property type="evidence" value="ECO:0007669"/>
    <property type="project" value="UniProtKB-UniRule"/>
</dbReference>
<dbReference type="GO" id="GO:0006089">
    <property type="term" value="P:lactate metabolic process"/>
    <property type="evidence" value="ECO:0007669"/>
    <property type="project" value="TreeGrafter"/>
</dbReference>
<dbReference type="GO" id="GO:0006099">
    <property type="term" value="P:tricarboxylic acid cycle"/>
    <property type="evidence" value="ECO:0007669"/>
    <property type="project" value="UniProtKB-UniRule"/>
</dbReference>
<dbReference type="CDD" id="cd01339">
    <property type="entry name" value="LDH-like_MDH"/>
    <property type="match status" value="1"/>
</dbReference>
<dbReference type="FunFam" id="3.40.50.720:FF:000018">
    <property type="entry name" value="Malate dehydrogenase"/>
    <property type="match status" value="1"/>
</dbReference>
<dbReference type="FunFam" id="3.90.110.10:FF:000004">
    <property type="entry name" value="Malate dehydrogenase"/>
    <property type="match status" value="1"/>
</dbReference>
<dbReference type="Gene3D" id="3.90.110.10">
    <property type="entry name" value="Lactate dehydrogenase/glycoside hydrolase, family 4, C-terminal"/>
    <property type="match status" value="1"/>
</dbReference>
<dbReference type="Gene3D" id="3.40.50.720">
    <property type="entry name" value="NAD(P)-binding Rossmann-like Domain"/>
    <property type="match status" value="1"/>
</dbReference>
<dbReference type="HAMAP" id="MF_00487">
    <property type="entry name" value="Malate_dehydrog_3"/>
    <property type="match status" value="1"/>
</dbReference>
<dbReference type="InterPro" id="IPR001557">
    <property type="entry name" value="L-lactate/malate_DH"/>
</dbReference>
<dbReference type="InterPro" id="IPR022383">
    <property type="entry name" value="Lactate/malate_DH_C"/>
</dbReference>
<dbReference type="InterPro" id="IPR001236">
    <property type="entry name" value="Lactate/malate_DH_N"/>
</dbReference>
<dbReference type="InterPro" id="IPR015955">
    <property type="entry name" value="Lactate_DH/Glyco_Ohase_4_C"/>
</dbReference>
<dbReference type="InterPro" id="IPR011275">
    <property type="entry name" value="Malate_DH_type3"/>
</dbReference>
<dbReference type="InterPro" id="IPR036291">
    <property type="entry name" value="NAD(P)-bd_dom_sf"/>
</dbReference>
<dbReference type="NCBIfam" id="TIGR01763">
    <property type="entry name" value="MalateDH_bact"/>
    <property type="match status" value="1"/>
</dbReference>
<dbReference type="NCBIfam" id="NF004863">
    <property type="entry name" value="PRK06223.1"/>
    <property type="match status" value="1"/>
</dbReference>
<dbReference type="PANTHER" id="PTHR43128">
    <property type="entry name" value="L-2-HYDROXYCARBOXYLATE DEHYDROGENASE (NAD(P)(+))"/>
    <property type="match status" value="1"/>
</dbReference>
<dbReference type="PANTHER" id="PTHR43128:SF16">
    <property type="entry name" value="L-LACTATE DEHYDROGENASE"/>
    <property type="match status" value="1"/>
</dbReference>
<dbReference type="Pfam" id="PF02866">
    <property type="entry name" value="Ldh_1_C"/>
    <property type="match status" value="1"/>
</dbReference>
<dbReference type="Pfam" id="PF00056">
    <property type="entry name" value="Ldh_1_N"/>
    <property type="match status" value="1"/>
</dbReference>
<dbReference type="PIRSF" id="PIRSF000102">
    <property type="entry name" value="Lac_mal_DH"/>
    <property type="match status" value="1"/>
</dbReference>
<dbReference type="PRINTS" id="PR00086">
    <property type="entry name" value="LLDHDRGNASE"/>
</dbReference>
<dbReference type="SUPFAM" id="SSF56327">
    <property type="entry name" value="LDH C-terminal domain-like"/>
    <property type="match status" value="1"/>
</dbReference>
<dbReference type="SUPFAM" id="SSF51735">
    <property type="entry name" value="NAD(P)-binding Rossmann-fold domains"/>
    <property type="match status" value="1"/>
</dbReference>
<sequence length="314" mass="34175">MKKNPKISLIGSGNIGGTLAHLISLKKLGDIVLFDVSEGLPQGKALDLMQAATIEGSDIKIKGTNDYRDIEGSDAVIITAGLPRKPGMSRDDLISVNTKIMKDVAQNIKKYAQNAFVIVITNPLDIMVYVMLKESGLPHNKVIGMAGVLDSSRFNLFLAKEFKVSVKNVNSIVLGGHGDTMVPLLRYSTISGVPIPDLIKMGLSSNKNIEKIIDRTKNGGGEIVKLLKTGSAYYAPAASAIAMLESYLKDKRQILTCAAYLQGEYDIHDLYIGVPIIIGKEGVIKVIELQLTEEEKILFYKSVTEVKKLIDTIQ</sequence>
<accession>Q9ZDF3</accession>
<keyword id="KW-0520">NAD</keyword>
<keyword id="KW-0560">Oxidoreductase</keyword>
<keyword id="KW-1185">Reference proteome</keyword>
<keyword id="KW-0816">Tricarboxylic acid cycle</keyword>
<name>MDH_RICPR</name>